<keyword id="KW-0378">Hydrolase</keyword>
<keyword id="KW-0479">Metal-binding</keyword>
<keyword id="KW-0482">Metalloprotease</keyword>
<keyword id="KW-0645">Protease</keyword>
<keyword id="KW-1185">Reference proteome</keyword>
<keyword id="KW-0862">Zinc</keyword>
<dbReference type="EMBL" id="AE010299">
    <property type="protein sequence ID" value="AAM05382.1"/>
    <property type="molecule type" value="Genomic_DNA"/>
</dbReference>
<dbReference type="RefSeq" id="WP_011021974.1">
    <property type="nucleotide sequence ID" value="NC_003552.1"/>
</dbReference>
<dbReference type="SMR" id="Q8TPD4"/>
<dbReference type="STRING" id="188937.MA_1979"/>
<dbReference type="EnsemblBacteria" id="AAM05382">
    <property type="protein sequence ID" value="AAM05382"/>
    <property type="gene ID" value="MA_1979"/>
</dbReference>
<dbReference type="GeneID" id="1473868"/>
<dbReference type="KEGG" id="mac:MA_1979"/>
<dbReference type="HOGENOM" id="CLU_073529_0_2_2"/>
<dbReference type="InParanoid" id="Q8TPD4"/>
<dbReference type="OrthoDB" id="303892at2157"/>
<dbReference type="PhylomeDB" id="Q8TPD4"/>
<dbReference type="Proteomes" id="UP000002487">
    <property type="component" value="Chromosome"/>
</dbReference>
<dbReference type="GO" id="GO:0046872">
    <property type="term" value="F:metal ion binding"/>
    <property type="evidence" value="ECO:0007669"/>
    <property type="project" value="UniProtKB-KW"/>
</dbReference>
<dbReference type="GO" id="GO:0008237">
    <property type="term" value="F:metallopeptidase activity"/>
    <property type="evidence" value="ECO:0007669"/>
    <property type="project" value="UniProtKB-KW"/>
</dbReference>
<dbReference type="GO" id="GO:0006508">
    <property type="term" value="P:proteolysis"/>
    <property type="evidence" value="ECO:0007669"/>
    <property type="project" value="UniProtKB-KW"/>
</dbReference>
<dbReference type="CDD" id="cd08071">
    <property type="entry name" value="MPN_DUF2466"/>
    <property type="match status" value="1"/>
</dbReference>
<dbReference type="Gene3D" id="3.40.140.10">
    <property type="entry name" value="Cytidine Deaminase, domain 2"/>
    <property type="match status" value="1"/>
</dbReference>
<dbReference type="InterPro" id="IPR037518">
    <property type="entry name" value="MPN"/>
</dbReference>
<dbReference type="InterPro" id="IPR025657">
    <property type="entry name" value="RadC_JAB"/>
</dbReference>
<dbReference type="InterPro" id="IPR001405">
    <property type="entry name" value="UPF0758"/>
</dbReference>
<dbReference type="InterPro" id="IPR020891">
    <property type="entry name" value="UPF0758_CS"/>
</dbReference>
<dbReference type="InterPro" id="IPR046778">
    <property type="entry name" value="UPF0758_N"/>
</dbReference>
<dbReference type="NCBIfam" id="NF000642">
    <property type="entry name" value="PRK00024.1"/>
    <property type="match status" value="1"/>
</dbReference>
<dbReference type="NCBIfam" id="TIGR00608">
    <property type="entry name" value="radc"/>
    <property type="match status" value="1"/>
</dbReference>
<dbReference type="PANTHER" id="PTHR30471">
    <property type="entry name" value="DNA REPAIR PROTEIN RADC"/>
    <property type="match status" value="1"/>
</dbReference>
<dbReference type="PANTHER" id="PTHR30471:SF3">
    <property type="entry name" value="UPF0758 PROTEIN YEES-RELATED"/>
    <property type="match status" value="1"/>
</dbReference>
<dbReference type="Pfam" id="PF04002">
    <property type="entry name" value="RadC"/>
    <property type="match status" value="1"/>
</dbReference>
<dbReference type="Pfam" id="PF20582">
    <property type="entry name" value="UPF0758_N"/>
    <property type="match status" value="1"/>
</dbReference>
<dbReference type="PROSITE" id="PS50249">
    <property type="entry name" value="MPN"/>
    <property type="match status" value="1"/>
</dbReference>
<dbReference type="PROSITE" id="PS01302">
    <property type="entry name" value="UPF0758"/>
    <property type="match status" value="1"/>
</dbReference>
<reference key="1">
    <citation type="journal article" date="2002" name="Genome Res.">
        <title>The genome of Methanosarcina acetivorans reveals extensive metabolic and physiological diversity.</title>
        <authorList>
            <person name="Galagan J.E."/>
            <person name="Nusbaum C."/>
            <person name="Roy A."/>
            <person name="Endrizzi M.G."/>
            <person name="Macdonald P."/>
            <person name="FitzHugh W."/>
            <person name="Calvo S."/>
            <person name="Engels R."/>
            <person name="Smirnov S."/>
            <person name="Atnoor D."/>
            <person name="Brown A."/>
            <person name="Allen N."/>
            <person name="Naylor J."/>
            <person name="Stange-Thomann N."/>
            <person name="DeArellano K."/>
            <person name="Johnson R."/>
            <person name="Linton L."/>
            <person name="McEwan P."/>
            <person name="McKernan K."/>
            <person name="Talamas J."/>
            <person name="Tirrell A."/>
            <person name="Ye W."/>
            <person name="Zimmer A."/>
            <person name="Barber R.D."/>
            <person name="Cann I."/>
            <person name="Graham D.E."/>
            <person name="Grahame D.A."/>
            <person name="Guss A.M."/>
            <person name="Hedderich R."/>
            <person name="Ingram-Smith C."/>
            <person name="Kuettner H.C."/>
            <person name="Krzycki J.A."/>
            <person name="Leigh J.A."/>
            <person name="Li W."/>
            <person name="Liu J."/>
            <person name="Mukhopadhyay B."/>
            <person name="Reeve J.N."/>
            <person name="Smith K."/>
            <person name="Springer T.A."/>
            <person name="Umayam L.A."/>
            <person name="White O."/>
            <person name="White R.H."/>
            <person name="de Macario E.C."/>
            <person name="Ferry J.G."/>
            <person name="Jarrell K.F."/>
            <person name="Jing H."/>
            <person name="Macario A.J.L."/>
            <person name="Paulsen I.T."/>
            <person name="Pritchett M."/>
            <person name="Sowers K.R."/>
            <person name="Swanson R.V."/>
            <person name="Zinder S.H."/>
            <person name="Lander E."/>
            <person name="Metcalf W.W."/>
            <person name="Birren B."/>
        </authorList>
    </citation>
    <scope>NUCLEOTIDE SEQUENCE [LARGE SCALE GENOMIC DNA]</scope>
    <source>
        <strain>ATCC 35395 / DSM 2834 / JCM 12185 / C2A</strain>
    </source>
</reference>
<protein>
    <recommendedName>
        <fullName>UPF0758 protein MA_1979</fullName>
    </recommendedName>
</protein>
<gene>
    <name type="ordered locus">MA_1979</name>
</gene>
<accession>Q8TPD4</accession>
<feature type="chain" id="PRO_0000190760" description="UPF0758 protein MA_1979">
    <location>
        <begin position="1"/>
        <end position="229"/>
    </location>
</feature>
<feature type="domain" description="MPN" evidence="1">
    <location>
        <begin position="106"/>
        <end position="228"/>
    </location>
</feature>
<feature type="short sequence motif" description="JAMM motif" evidence="1">
    <location>
        <begin position="177"/>
        <end position="190"/>
    </location>
</feature>
<feature type="binding site" evidence="1">
    <location>
        <position position="177"/>
    </location>
    <ligand>
        <name>Zn(2+)</name>
        <dbReference type="ChEBI" id="CHEBI:29105"/>
        <note>catalytic</note>
    </ligand>
</feature>
<feature type="binding site" evidence="1">
    <location>
        <position position="179"/>
    </location>
    <ligand>
        <name>Zn(2+)</name>
        <dbReference type="ChEBI" id="CHEBI:29105"/>
        <note>catalytic</note>
    </ligand>
</feature>
<feature type="binding site" evidence="1">
    <location>
        <position position="190"/>
    </location>
    <ligand>
        <name>Zn(2+)</name>
        <dbReference type="ChEBI" id="CHEBI:29105"/>
        <note>catalytic</note>
    </ligand>
</feature>
<organism>
    <name type="scientific">Methanosarcina acetivorans (strain ATCC 35395 / DSM 2834 / JCM 12185 / C2A)</name>
    <dbReference type="NCBI Taxonomy" id="188937"/>
    <lineage>
        <taxon>Archaea</taxon>
        <taxon>Methanobacteriati</taxon>
        <taxon>Methanobacteriota</taxon>
        <taxon>Stenosarchaea group</taxon>
        <taxon>Methanomicrobia</taxon>
        <taxon>Methanosarcinales</taxon>
        <taxon>Methanosarcinaceae</taxon>
        <taxon>Methanosarcina</taxon>
    </lineage>
</organism>
<proteinExistence type="inferred from homology"/>
<comment type="similarity">
    <text evidence="2">Belongs to the UPF0758 family.</text>
</comment>
<sequence length="229" mass="25710">MEVNKVRIHDLPEEDRPRERLIRSGPESLSNAELLGIVLRTGSKEENVISLCSRILAEYNIKQLSLANVSRLTQVHGVGKAKAAQIAAVFELARRLETFVEEPKRKICSPKDVYALMYPRMREQKKEKFITLYLDTKNQILKEEVVSIGSLNASIVHPREVFKSALLESSASVIMVHNHPSGDPSPSREDIMVTEKLVEGGKLLGIDILDHIIIGDGRYVSLKDEGFVR</sequence>
<name>Y1979_METAC</name>
<evidence type="ECO:0000255" key="1">
    <source>
        <dbReference type="PROSITE-ProRule" id="PRU01182"/>
    </source>
</evidence>
<evidence type="ECO:0000305" key="2"/>